<reference key="1">
    <citation type="submission" date="2004-11" db="EMBL/GenBank/DDBJ databases">
        <authorList>
            <consortium name="The German cDNA consortium"/>
        </authorList>
    </citation>
    <scope>NUCLEOTIDE SEQUENCE [LARGE SCALE MRNA]</scope>
    <source>
        <tissue>Kidney</tissue>
    </source>
</reference>
<protein>
    <recommendedName>
        <fullName>WD repeat-containing protein 13</fullName>
    </recommendedName>
</protein>
<keyword id="KW-0488">Methylation</keyword>
<keyword id="KW-0539">Nucleus</keyword>
<keyword id="KW-0597">Phosphoprotein</keyword>
<keyword id="KW-1185">Reference proteome</keyword>
<keyword id="KW-0677">Repeat</keyword>
<keyword id="KW-0853">WD repeat</keyword>
<name>WDR13_PONAB</name>
<sequence>MAAVWQQVLAVDARYNAYRTPTFPQFRTQYIRRRSQLLRENAKAGHPPALRRQYLRLRGQLLGQRYGPLSEPGSARAYSNSIVRSSRTTLDRMEDFEDDPRALGARGHRRSVSRGSYQLQAQMNRAVYEDRPPGSVVPTSAAEASRAMAGDTSLSENYAFAGMYHVFDQHVDEAVPRVRFANDDRHRLACCSLDGSISLCQLVPAPPTVLRVLRGHTRGVSDFAWSLSNDILVSTSLDATMRIWASEDGRCIREIPDPDGAELLCCTFQPVNNNLTVVGNAKHNVHVMNISTGKKVKGGSSKLTGRVLALSFDAPGRLLWAGDDRGSVFSFLFDMATGKLTKAKRLVVHEGSPVTSISARSWVSREARDPSLLINACLNKLLLYRVVDNEGTLQLKRSFPIEQSSHPVRSIFCPLMSFRQGACVVTGSEDMCVHFFDVERAAKAAVNKLQGHSAPVLDVSFNCDESLLASSDASGMVIVWRREQK</sequence>
<gene>
    <name type="primary">WDR13</name>
</gene>
<dbReference type="EMBL" id="CR857337">
    <property type="protein sequence ID" value="CAH89633.1"/>
    <property type="molecule type" value="mRNA"/>
</dbReference>
<dbReference type="RefSeq" id="NP_001124732.1">
    <property type="nucleotide sequence ID" value="NM_001131260.1"/>
</dbReference>
<dbReference type="RefSeq" id="XP_024096032.1">
    <property type="nucleotide sequence ID" value="XM_024240264.3"/>
</dbReference>
<dbReference type="RefSeq" id="XP_063577044.1">
    <property type="nucleotide sequence ID" value="XM_063720974.1"/>
</dbReference>
<dbReference type="SMR" id="Q5RF24"/>
<dbReference type="FunCoup" id="Q5RF24">
    <property type="interactions" value="996"/>
</dbReference>
<dbReference type="STRING" id="9601.ENSPPYP00000022740"/>
<dbReference type="GeneID" id="100171581"/>
<dbReference type="KEGG" id="pon:100171581"/>
<dbReference type="CTD" id="64743"/>
<dbReference type="eggNOG" id="KOG0266">
    <property type="taxonomic scope" value="Eukaryota"/>
</dbReference>
<dbReference type="InParanoid" id="Q5RF24"/>
<dbReference type="OrthoDB" id="1932312at2759"/>
<dbReference type="Proteomes" id="UP000001595">
    <property type="component" value="Unplaced"/>
</dbReference>
<dbReference type="GO" id="GO:0005634">
    <property type="term" value="C:nucleus"/>
    <property type="evidence" value="ECO:0007669"/>
    <property type="project" value="UniProtKB-SubCell"/>
</dbReference>
<dbReference type="GO" id="GO:1990841">
    <property type="term" value="F:promoter-specific chromatin binding"/>
    <property type="evidence" value="ECO:0007669"/>
    <property type="project" value="TreeGrafter"/>
</dbReference>
<dbReference type="FunFam" id="2.130.10.10:FF:000382">
    <property type="entry name" value="WD repeat-containing protein 13"/>
    <property type="match status" value="1"/>
</dbReference>
<dbReference type="Gene3D" id="2.130.10.10">
    <property type="entry name" value="YVTN repeat-like/Quinoprotein amine dehydrogenase"/>
    <property type="match status" value="2"/>
</dbReference>
<dbReference type="InterPro" id="IPR015943">
    <property type="entry name" value="WD40/YVTN_repeat-like_dom_sf"/>
</dbReference>
<dbReference type="InterPro" id="IPR036322">
    <property type="entry name" value="WD40_repeat_dom_sf"/>
</dbReference>
<dbReference type="InterPro" id="IPR001680">
    <property type="entry name" value="WD40_rpt"/>
</dbReference>
<dbReference type="InterPro" id="IPR051350">
    <property type="entry name" value="WD_repeat-ST_regulator"/>
</dbReference>
<dbReference type="PANTHER" id="PTHR22838">
    <property type="entry name" value="WD REPEAT PROTEIN 26-RELATED"/>
    <property type="match status" value="1"/>
</dbReference>
<dbReference type="PANTHER" id="PTHR22838:SF4">
    <property type="entry name" value="WD REPEAT-CONTAINING PROTEIN 13"/>
    <property type="match status" value="1"/>
</dbReference>
<dbReference type="Pfam" id="PF00400">
    <property type="entry name" value="WD40"/>
    <property type="match status" value="2"/>
</dbReference>
<dbReference type="SMART" id="SM00320">
    <property type="entry name" value="WD40"/>
    <property type="match status" value="5"/>
</dbReference>
<dbReference type="SUPFAM" id="SSF50978">
    <property type="entry name" value="WD40 repeat-like"/>
    <property type="match status" value="1"/>
</dbReference>
<dbReference type="PROSITE" id="PS50082">
    <property type="entry name" value="WD_REPEATS_2"/>
    <property type="match status" value="2"/>
</dbReference>
<dbReference type="PROSITE" id="PS50294">
    <property type="entry name" value="WD_REPEATS_REGION"/>
    <property type="match status" value="2"/>
</dbReference>
<feature type="chain" id="PRO_0000289994" description="WD repeat-containing protein 13">
    <location>
        <begin position="1"/>
        <end position="485"/>
    </location>
</feature>
<feature type="repeat" description="WD 1">
    <location>
        <begin position="170"/>
        <end position="210"/>
    </location>
</feature>
<feature type="repeat" description="WD 2">
    <location>
        <begin position="215"/>
        <end position="254"/>
    </location>
</feature>
<feature type="repeat" description="WD 3">
    <location>
        <begin position="302"/>
        <end position="341"/>
    </location>
</feature>
<feature type="repeat" description="WD 4">
    <location>
        <begin position="406"/>
        <end position="446"/>
    </location>
</feature>
<feature type="repeat" description="WD 5">
    <location>
        <begin position="451"/>
        <end position="484"/>
    </location>
</feature>
<feature type="modified residue" description="Phosphoserine" evidence="3">
    <location>
        <position position="70"/>
    </location>
</feature>
<feature type="modified residue" description="Phosphoserine" evidence="3">
    <location>
        <position position="74"/>
    </location>
</feature>
<feature type="modified residue" description="Phosphoserine" evidence="3">
    <location>
        <position position="79"/>
    </location>
</feature>
<feature type="modified residue" description="Asymmetric dimethylarginine; alternate" evidence="2">
    <location>
        <position position="114"/>
    </location>
</feature>
<feature type="modified residue" description="Omega-N-methylarginine; alternate" evidence="3">
    <location>
        <position position="114"/>
    </location>
</feature>
<organism>
    <name type="scientific">Pongo abelii</name>
    <name type="common">Sumatran orangutan</name>
    <name type="synonym">Pongo pygmaeus abelii</name>
    <dbReference type="NCBI Taxonomy" id="9601"/>
    <lineage>
        <taxon>Eukaryota</taxon>
        <taxon>Metazoa</taxon>
        <taxon>Chordata</taxon>
        <taxon>Craniata</taxon>
        <taxon>Vertebrata</taxon>
        <taxon>Euteleostomi</taxon>
        <taxon>Mammalia</taxon>
        <taxon>Eutheria</taxon>
        <taxon>Euarchontoglires</taxon>
        <taxon>Primates</taxon>
        <taxon>Haplorrhini</taxon>
        <taxon>Catarrhini</taxon>
        <taxon>Hominidae</taxon>
        <taxon>Pongo</taxon>
    </lineage>
</organism>
<accession>Q5RF24</accession>
<comment type="subcellular location">
    <subcellularLocation>
        <location evidence="1">Nucleus</location>
    </subcellularLocation>
</comment>
<evidence type="ECO:0000250" key="1"/>
<evidence type="ECO:0000250" key="2">
    <source>
        <dbReference type="UniProtKB" id="Q91V09"/>
    </source>
</evidence>
<evidence type="ECO:0000250" key="3">
    <source>
        <dbReference type="UniProtKB" id="Q9H1Z4"/>
    </source>
</evidence>
<proteinExistence type="evidence at transcript level"/>